<dbReference type="EMBL" id="AB023064">
    <property type="protein sequence ID" value="BAA82787.1"/>
    <property type="molecule type" value="Genomic_DNA"/>
</dbReference>
<dbReference type="EMBL" id="CP002002">
    <property type="protein sequence ID" value="AEO06460.1"/>
    <property type="molecule type" value="Genomic_DNA"/>
</dbReference>
<dbReference type="PIR" id="T43736">
    <property type="entry name" value="T43736"/>
</dbReference>
<dbReference type="RefSeq" id="WP_003726026.1">
    <property type="nucleotide sequence ID" value="NC_017544.1"/>
</dbReference>
<dbReference type="SMR" id="G2K048"/>
<dbReference type="KEGG" id="lmt:LMRG_00928"/>
<dbReference type="HOGENOM" id="CLU_050019_1_0_9"/>
<dbReference type="Proteomes" id="UP000001288">
    <property type="component" value="Chromosome"/>
</dbReference>
<dbReference type="GO" id="GO:0003677">
    <property type="term" value="F:DNA binding"/>
    <property type="evidence" value="ECO:0007669"/>
    <property type="project" value="InterPro"/>
</dbReference>
<dbReference type="GO" id="GO:0045892">
    <property type="term" value="P:negative regulation of DNA-templated transcription"/>
    <property type="evidence" value="ECO:0007669"/>
    <property type="project" value="UniProtKB-UniRule"/>
</dbReference>
<dbReference type="FunFam" id="1.10.10.10:FF:000049">
    <property type="entry name" value="Heat-inducible transcription repressor HrcA"/>
    <property type="match status" value="1"/>
</dbReference>
<dbReference type="Gene3D" id="3.30.450.40">
    <property type="match status" value="1"/>
</dbReference>
<dbReference type="Gene3D" id="3.30.390.60">
    <property type="entry name" value="Heat-inducible transcription repressor hrca homolog, domain 3"/>
    <property type="match status" value="1"/>
</dbReference>
<dbReference type="Gene3D" id="1.10.10.10">
    <property type="entry name" value="Winged helix-like DNA-binding domain superfamily/Winged helix DNA-binding domain"/>
    <property type="match status" value="1"/>
</dbReference>
<dbReference type="HAMAP" id="MF_00081">
    <property type="entry name" value="HrcA"/>
    <property type="match status" value="1"/>
</dbReference>
<dbReference type="InterPro" id="IPR029016">
    <property type="entry name" value="GAF-like_dom_sf"/>
</dbReference>
<dbReference type="InterPro" id="IPR002571">
    <property type="entry name" value="HrcA"/>
</dbReference>
<dbReference type="InterPro" id="IPR021153">
    <property type="entry name" value="HrcA_C"/>
</dbReference>
<dbReference type="InterPro" id="IPR036388">
    <property type="entry name" value="WH-like_DNA-bd_sf"/>
</dbReference>
<dbReference type="InterPro" id="IPR036390">
    <property type="entry name" value="WH_DNA-bd_sf"/>
</dbReference>
<dbReference type="InterPro" id="IPR023120">
    <property type="entry name" value="WHTH_transcript_rep_HrcA_IDD"/>
</dbReference>
<dbReference type="NCBIfam" id="TIGR00331">
    <property type="entry name" value="hrcA"/>
    <property type="match status" value="1"/>
</dbReference>
<dbReference type="PANTHER" id="PTHR34824">
    <property type="entry name" value="HEAT-INDUCIBLE TRANSCRIPTION REPRESSOR HRCA"/>
    <property type="match status" value="1"/>
</dbReference>
<dbReference type="PANTHER" id="PTHR34824:SF1">
    <property type="entry name" value="HEAT-INDUCIBLE TRANSCRIPTION REPRESSOR HRCA"/>
    <property type="match status" value="1"/>
</dbReference>
<dbReference type="Pfam" id="PF01628">
    <property type="entry name" value="HrcA"/>
    <property type="match status" value="1"/>
</dbReference>
<dbReference type="PIRSF" id="PIRSF005485">
    <property type="entry name" value="HrcA"/>
    <property type="match status" value="1"/>
</dbReference>
<dbReference type="SUPFAM" id="SSF55781">
    <property type="entry name" value="GAF domain-like"/>
    <property type="match status" value="1"/>
</dbReference>
<dbReference type="SUPFAM" id="SSF46785">
    <property type="entry name" value="Winged helix' DNA-binding domain"/>
    <property type="match status" value="1"/>
</dbReference>
<accession>G2K048</accession>
<accession>Q9S5A6</accession>
<protein>
    <recommendedName>
        <fullName evidence="1">Heat-inducible transcription repressor HrcA</fullName>
    </recommendedName>
</protein>
<organism>
    <name type="scientific">Listeria monocytogenes serotype 1/2a (strain 10403S)</name>
    <dbReference type="NCBI Taxonomy" id="393133"/>
    <lineage>
        <taxon>Bacteria</taxon>
        <taxon>Bacillati</taxon>
        <taxon>Bacillota</taxon>
        <taxon>Bacilli</taxon>
        <taxon>Bacillales</taxon>
        <taxon>Listeriaceae</taxon>
        <taxon>Listeria</taxon>
    </lineage>
</organism>
<gene>
    <name evidence="1" type="primary">hrcA</name>
    <name type="ordered locus">LMRG_00928</name>
</gene>
<evidence type="ECO:0000255" key="1">
    <source>
        <dbReference type="HAMAP-Rule" id="MF_00081"/>
    </source>
</evidence>
<proteinExistence type="inferred from homology"/>
<sequence length="345" mass="39681">MLTERQLLIFRAIIDHFTWTIQPVGSKNLLKEKGLPYSSATIRNEMGVLEEYGFIEKTHSSSGRVPSEKGYRFYVDYLLQPKKLDKSDRQMIRSFFSENYYEMEGLIQNSALMLSDLTNYTSILLGPEATKNHLSGFRFVPINNFQAMLILITDQGHVDNHLVTIPEGTTLSDIERMVNILNERLVGLSLDDLKVQIPMEVKELLGKHVRNYESFMHVFSDSFAQASQQKVYFGGKTNILNQPEFHDINKVREMLHLMEEEQDVYELFRDIPDGLQVKIGRENNNSLMEDCSIITATYNIAGERVGGIVLLGPTRMEYSRMMGLVDVMSRDLTDVLTKLYRDNQN</sequence>
<name>HRCA_LISM4</name>
<comment type="function">
    <text evidence="1">Negative regulator of class I heat shock genes (grpE-dnaK-dnaJ and groELS operons). Prevents heat-shock induction of these operons.</text>
</comment>
<comment type="similarity">
    <text evidence="1">Belongs to the HrcA family.</text>
</comment>
<feature type="chain" id="PRO_0000418524" description="Heat-inducible transcription repressor HrcA">
    <location>
        <begin position="1"/>
        <end position="345"/>
    </location>
</feature>
<reference key="1">
    <citation type="journal article" date="2000" name="Cell Stress Chaperones">
        <title>Cloning, sequencing, and transcriptional analysis of the dnaK heat shock operon of Listeria monocytogenes.</title>
        <authorList>
            <person name="Hanawa T."/>
            <person name="Kai M."/>
            <person name="Kamiya S."/>
            <person name="Yamamoto T."/>
        </authorList>
    </citation>
    <scope>NUCLEOTIDE SEQUENCE [GENOMIC DNA]</scope>
    <source>
        <strain>10403S</strain>
    </source>
</reference>
<reference key="2">
    <citation type="submission" date="2010-04" db="EMBL/GenBank/DDBJ databases">
        <title>The genome sequence of Listeria monocytogenes strain 10403S.</title>
        <authorList>
            <consortium name="The Broad Institute Genome Sequencing Platform"/>
            <consortium name="The Broad Institute Genome Sequencing Center for Infectious Disease"/>
            <person name="Borowsky M."/>
            <person name="Borodovsky M."/>
            <person name="Young S.K."/>
            <person name="Zeng Q."/>
            <person name="Koehrsen M."/>
            <person name="Fitzgerald M."/>
            <person name="Wiedmann M."/>
            <person name="Swaminathan B."/>
            <person name="Lauer P."/>
            <person name="Portnoy D."/>
            <person name="Cossart P."/>
            <person name="Buchrieser C."/>
            <person name="Higgins D."/>
            <person name="Abouelleil A."/>
            <person name="Alvarado L."/>
            <person name="Arachchi H.M."/>
            <person name="Berlin A."/>
            <person name="Borenstein D."/>
            <person name="Brown A."/>
            <person name="Chapman S.B."/>
            <person name="Chen Z."/>
            <person name="Dunbar C.D."/>
            <person name="Engels R."/>
            <person name="Freedman E."/>
            <person name="Gearin G."/>
            <person name="Gellesch M."/>
            <person name="Goldberg J."/>
            <person name="Griggs A."/>
            <person name="Gujja S."/>
            <person name="Heilman E."/>
            <person name="Heiman D."/>
            <person name="Howarth C."/>
            <person name="Jen D."/>
            <person name="Larson L."/>
            <person name="Lui A."/>
            <person name="MacDonald J."/>
            <person name="Mehta T."/>
            <person name="Montmayeur A."/>
            <person name="Neiman D."/>
            <person name="Park D."/>
            <person name="Pearson M."/>
            <person name="Priest M."/>
            <person name="Richards J."/>
            <person name="Roberts A."/>
            <person name="Saif S."/>
            <person name="Shea T."/>
            <person name="Shenoy N."/>
            <person name="Sisk P."/>
            <person name="Stolte C."/>
            <person name="Sykes S."/>
            <person name="Walk T."/>
            <person name="White J."/>
            <person name="Yandava C."/>
            <person name="Haas B."/>
            <person name="Nusbaum C."/>
            <person name="Birren B."/>
        </authorList>
    </citation>
    <scope>NUCLEOTIDE SEQUENCE [LARGE SCALE GENOMIC DNA]</scope>
    <source>
        <strain>10403S</strain>
    </source>
</reference>
<keyword id="KW-0678">Repressor</keyword>
<keyword id="KW-0346">Stress response</keyword>
<keyword id="KW-0804">Transcription</keyword>
<keyword id="KW-0805">Transcription regulation</keyword>